<protein>
    <recommendedName>
        <fullName evidence="1">Small ribosomal subunit protein uS13</fullName>
    </recommendedName>
    <alternativeName>
        <fullName evidence="3">30S ribosomal protein S13</fullName>
    </alternativeName>
</protein>
<accession>B8G6Q1</accession>
<keyword id="KW-0687">Ribonucleoprotein</keyword>
<keyword id="KW-0689">Ribosomal protein</keyword>
<keyword id="KW-0694">RNA-binding</keyword>
<keyword id="KW-0699">rRNA-binding</keyword>
<keyword id="KW-0820">tRNA-binding</keyword>
<gene>
    <name evidence="1" type="primary">rpsM</name>
    <name type="ordered locus">Cagg_3000</name>
</gene>
<evidence type="ECO:0000255" key="1">
    <source>
        <dbReference type="HAMAP-Rule" id="MF_01315"/>
    </source>
</evidence>
<evidence type="ECO:0000256" key="2">
    <source>
        <dbReference type="SAM" id="MobiDB-lite"/>
    </source>
</evidence>
<evidence type="ECO:0000305" key="3"/>
<proteinExistence type="inferred from homology"/>
<sequence length="126" mass="14765">MARIAGVDIPRNKKIEIAITYIYGIGRSNGMDVLRKANVDPNRRVRDLTEEEVGRIREIIDREYRVEGDLRREVQLNIKRLMDIGCYRGLRHRRGMPVRGQRTRTNARTRRGRRGQAIGIKKKVKK</sequence>
<organism>
    <name type="scientific">Chloroflexus aggregans (strain MD-66 / DSM 9485)</name>
    <dbReference type="NCBI Taxonomy" id="326427"/>
    <lineage>
        <taxon>Bacteria</taxon>
        <taxon>Bacillati</taxon>
        <taxon>Chloroflexota</taxon>
        <taxon>Chloroflexia</taxon>
        <taxon>Chloroflexales</taxon>
        <taxon>Chloroflexineae</taxon>
        <taxon>Chloroflexaceae</taxon>
        <taxon>Chloroflexus</taxon>
    </lineage>
</organism>
<dbReference type="EMBL" id="CP001337">
    <property type="protein sequence ID" value="ACL25860.1"/>
    <property type="molecule type" value="Genomic_DNA"/>
</dbReference>
<dbReference type="RefSeq" id="WP_015941716.1">
    <property type="nucleotide sequence ID" value="NC_011831.1"/>
</dbReference>
<dbReference type="SMR" id="B8G6Q1"/>
<dbReference type="STRING" id="326427.Cagg_3000"/>
<dbReference type="KEGG" id="cag:Cagg_3000"/>
<dbReference type="eggNOG" id="COG0099">
    <property type="taxonomic scope" value="Bacteria"/>
</dbReference>
<dbReference type="HOGENOM" id="CLU_103849_1_2_0"/>
<dbReference type="OrthoDB" id="9803610at2"/>
<dbReference type="Proteomes" id="UP000002508">
    <property type="component" value="Chromosome"/>
</dbReference>
<dbReference type="GO" id="GO:0005829">
    <property type="term" value="C:cytosol"/>
    <property type="evidence" value="ECO:0007669"/>
    <property type="project" value="TreeGrafter"/>
</dbReference>
<dbReference type="GO" id="GO:0015935">
    <property type="term" value="C:small ribosomal subunit"/>
    <property type="evidence" value="ECO:0007669"/>
    <property type="project" value="TreeGrafter"/>
</dbReference>
<dbReference type="GO" id="GO:0019843">
    <property type="term" value="F:rRNA binding"/>
    <property type="evidence" value="ECO:0007669"/>
    <property type="project" value="UniProtKB-UniRule"/>
</dbReference>
<dbReference type="GO" id="GO:0003735">
    <property type="term" value="F:structural constituent of ribosome"/>
    <property type="evidence" value="ECO:0007669"/>
    <property type="project" value="InterPro"/>
</dbReference>
<dbReference type="GO" id="GO:0000049">
    <property type="term" value="F:tRNA binding"/>
    <property type="evidence" value="ECO:0007669"/>
    <property type="project" value="UniProtKB-UniRule"/>
</dbReference>
<dbReference type="GO" id="GO:0006412">
    <property type="term" value="P:translation"/>
    <property type="evidence" value="ECO:0007669"/>
    <property type="project" value="UniProtKB-UniRule"/>
</dbReference>
<dbReference type="FunFam" id="1.10.8.50:FF:000001">
    <property type="entry name" value="30S ribosomal protein S13"/>
    <property type="match status" value="1"/>
</dbReference>
<dbReference type="FunFam" id="4.10.910.10:FF:000001">
    <property type="entry name" value="30S ribosomal protein S13"/>
    <property type="match status" value="1"/>
</dbReference>
<dbReference type="Gene3D" id="1.10.8.50">
    <property type="match status" value="1"/>
</dbReference>
<dbReference type="Gene3D" id="4.10.910.10">
    <property type="entry name" value="30s ribosomal protein s13, domain 2"/>
    <property type="match status" value="1"/>
</dbReference>
<dbReference type="HAMAP" id="MF_01315">
    <property type="entry name" value="Ribosomal_uS13"/>
    <property type="match status" value="1"/>
</dbReference>
<dbReference type="InterPro" id="IPR027437">
    <property type="entry name" value="Rbsml_uS13_C"/>
</dbReference>
<dbReference type="InterPro" id="IPR001892">
    <property type="entry name" value="Ribosomal_uS13"/>
</dbReference>
<dbReference type="InterPro" id="IPR010979">
    <property type="entry name" value="Ribosomal_uS13-like_H2TH"/>
</dbReference>
<dbReference type="InterPro" id="IPR019980">
    <property type="entry name" value="Ribosomal_uS13_bac-type"/>
</dbReference>
<dbReference type="InterPro" id="IPR018269">
    <property type="entry name" value="Ribosomal_uS13_CS"/>
</dbReference>
<dbReference type="NCBIfam" id="TIGR03631">
    <property type="entry name" value="uS13_bact"/>
    <property type="match status" value="1"/>
</dbReference>
<dbReference type="PANTHER" id="PTHR10871">
    <property type="entry name" value="30S RIBOSOMAL PROTEIN S13/40S RIBOSOMAL PROTEIN S18"/>
    <property type="match status" value="1"/>
</dbReference>
<dbReference type="PANTHER" id="PTHR10871:SF1">
    <property type="entry name" value="SMALL RIBOSOMAL SUBUNIT PROTEIN US13M"/>
    <property type="match status" value="1"/>
</dbReference>
<dbReference type="Pfam" id="PF00416">
    <property type="entry name" value="Ribosomal_S13"/>
    <property type="match status" value="1"/>
</dbReference>
<dbReference type="PIRSF" id="PIRSF002134">
    <property type="entry name" value="Ribosomal_S13"/>
    <property type="match status" value="1"/>
</dbReference>
<dbReference type="SUPFAM" id="SSF46946">
    <property type="entry name" value="S13-like H2TH domain"/>
    <property type="match status" value="1"/>
</dbReference>
<dbReference type="PROSITE" id="PS00646">
    <property type="entry name" value="RIBOSOMAL_S13_1"/>
    <property type="match status" value="1"/>
</dbReference>
<dbReference type="PROSITE" id="PS50159">
    <property type="entry name" value="RIBOSOMAL_S13_2"/>
    <property type="match status" value="1"/>
</dbReference>
<comment type="function">
    <text evidence="1">Located at the top of the head of the 30S subunit, it contacts several helices of the 16S rRNA. In the 70S ribosome it contacts the 23S rRNA (bridge B1a) and protein L5 of the 50S subunit (bridge B1b), connecting the 2 subunits; these bridges are implicated in subunit movement. Contacts the tRNAs in the A and P-sites.</text>
</comment>
<comment type="subunit">
    <text evidence="1">Part of the 30S ribosomal subunit. Forms a loose heterodimer with protein S19. Forms two bridges to the 50S subunit in the 70S ribosome.</text>
</comment>
<comment type="similarity">
    <text evidence="1">Belongs to the universal ribosomal protein uS13 family.</text>
</comment>
<reference key="1">
    <citation type="submission" date="2008-12" db="EMBL/GenBank/DDBJ databases">
        <title>Complete sequence of Chloroflexus aggregans DSM 9485.</title>
        <authorList>
            <consortium name="US DOE Joint Genome Institute"/>
            <person name="Lucas S."/>
            <person name="Copeland A."/>
            <person name="Lapidus A."/>
            <person name="Glavina del Rio T."/>
            <person name="Dalin E."/>
            <person name="Tice H."/>
            <person name="Pitluck S."/>
            <person name="Foster B."/>
            <person name="Larimer F."/>
            <person name="Land M."/>
            <person name="Hauser L."/>
            <person name="Kyrpides N."/>
            <person name="Mikhailova N."/>
            <person name="Bryant D.A."/>
            <person name="Richardson P."/>
        </authorList>
    </citation>
    <scope>NUCLEOTIDE SEQUENCE [LARGE SCALE GENOMIC DNA]</scope>
    <source>
        <strain>MD-66 / DSM 9485</strain>
    </source>
</reference>
<name>RS13_CHLAD</name>
<feature type="chain" id="PRO_1000165610" description="Small ribosomal subunit protein uS13">
    <location>
        <begin position="1"/>
        <end position="126"/>
    </location>
</feature>
<feature type="region of interest" description="Disordered" evidence="2">
    <location>
        <begin position="95"/>
        <end position="126"/>
    </location>
</feature>